<comment type="function">
    <text evidence="1">Together with its co-chaperonin GroES, plays an essential role in assisting protein folding. The GroEL-GroES system forms a nano-cage that allows encapsulation of the non-native substrate proteins and provides a physical environment optimized to promote and accelerate protein folding.</text>
</comment>
<comment type="catalytic activity">
    <reaction evidence="1">
        <text>ATP + H2O + a folded polypeptide = ADP + phosphate + an unfolded polypeptide.</text>
        <dbReference type="EC" id="5.6.1.7"/>
    </reaction>
</comment>
<comment type="subunit">
    <text evidence="1">Forms a cylinder of 14 subunits composed of two heptameric rings stacked back-to-back. Interacts with the co-chaperonin GroES.</text>
</comment>
<comment type="subcellular location">
    <subcellularLocation>
        <location evidence="1">Cytoplasm</location>
    </subcellularLocation>
</comment>
<comment type="similarity">
    <text evidence="1">Belongs to the chaperonin (HSP60) family.</text>
</comment>
<keyword id="KW-0067">ATP-binding</keyword>
<keyword id="KW-0143">Chaperone</keyword>
<keyword id="KW-0963">Cytoplasm</keyword>
<keyword id="KW-0413">Isomerase</keyword>
<keyword id="KW-0547">Nucleotide-binding</keyword>
<keyword id="KW-1185">Reference proteome</keyword>
<protein>
    <recommendedName>
        <fullName evidence="1">Chaperonin GroEL</fullName>
        <ecNumber evidence="1">5.6.1.7</ecNumber>
    </recommendedName>
    <alternativeName>
        <fullName evidence="1">60 kDa chaperonin</fullName>
    </alternativeName>
    <alternativeName>
        <fullName evidence="1">Chaperonin-60</fullName>
        <shortName evidence="1">Cpn60</shortName>
    </alternativeName>
</protein>
<organism>
    <name type="scientific">Shewanella oneidensis (strain ATCC 700550 / JCM 31522 / CIP 106686 / LMG 19005 / NCIMB 14063 / MR-1)</name>
    <dbReference type="NCBI Taxonomy" id="211586"/>
    <lineage>
        <taxon>Bacteria</taxon>
        <taxon>Pseudomonadati</taxon>
        <taxon>Pseudomonadota</taxon>
        <taxon>Gammaproteobacteria</taxon>
        <taxon>Alteromonadales</taxon>
        <taxon>Shewanellaceae</taxon>
        <taxon>Shewanella</taxon>
    </lineage>
</organism>
<accession>Q8CX48</accession>
<evidence type="ECO:0000255" key="1">
    <source>
        <dbReference type="HAMAP-Rule" id="MF_00600"/>
    </source>
</evidence>
<feature type="chain" id="PRO_0000063527" description="Chaperonin GroEL">
    <location>
        <begin position="1"/>
        <end position="545"/>
    </location>
</feature>
<feature type="binding site" evidence="1">
    <location>
        <begin position="30"/>
        <end position="33"/>
    </location>
    <ligand>
        <name>ATP</name>
        <dbReference type="ChEBI" id="CHEBI:30616"/>
    </ligand>
</feature>
<feature type="binding site" evidence="1">
    <location>
        <position position="51"/>
    </location>
    <ligand>
        <name>ATP</name>
        <dbReference type="ChEBI" id="CHEBI:30616"/>
    </ligand>
</feature>
<feature type="binding site" evidence="1">
    <location>
        <begin position="87"/>
        <end position="91"/>
    </location>
    <ligand>
        <name>ATP</name>
        <dbReference type="ChEBI" id="CHEBI:30616"/>
    </ligand>
</feature>
<feature type="binding site" evidence="1">
    <location>
        <position position="415"/>
    </location>
    <ligand>
        <name>ATP</name>
        <dbReference type="ChEBI" id="CHEBI:30616"/>
    </ligand>
</feature>
<feature type="binding site" evidence="1">
    <location>
        <position position="495"/>
    </location>
    <ligand>
        <name>ATP</name>
        <dbReference type="ChEBI" id="CHEBI:30616"/>
    </ligand>
</feature>
<gene>
    <name evidence="1" type="primary">groEL</name>
    <name evidence="1" type="synonym">groL</name>
    <name type="ordered locus">SO_0704</name>
</gene>
<dbReference type="EC" id="5.6.1.7" evidence="1"/>
<dbReference type="EMBL" id="AE014299">
    <property type="protein sequence ID" value="AAN53782.1"/>
    <property type="molecule type" value="Genomic_DNA"/>
</dbReference>
<dbReference type="RefSeq" id="NP_716337.1">
    <property type="nucleotide sequence ID" value="NC_004347.2"/>
</dbReference>
<dbReference type="RefSeq" id="WP_011071022.1">
    <property type="nucleotide sequence ID" value="NC_004347.2"/>
</dbReference>
<dbReference type="SMR" id="Q8CX48"/>
<dbReference type="STRING" id="211586.SO_0704"/>
<dbReference type="PaxDb" id="211586-SO_0704"/>
<dbReference type="KEGG" id="son:SO_0704"/>
<dbReference type="PATRIC" id="fig|211586.12.peg.679"/>
<dbReference type="eggNOG" id="COG0459">
    <property type="taxonomic scope" value="Bacteria"/>
</dbReference>
<dbReference type="HOGENOM" id="CLU_016503_3_0_6"/>
<dbReference type="OrthoDB" id="9766614at2"/>
<dbReference type="PhylomeDB" id="Q8CX48"/>
<dbReference type="BioCyc" id="SONE211586:G1GMP-664-MONOMER"/>
<dbReference type="Proteomes" id="UP000008186">
    <property type="component" value="Chromosome"/>
</dbReference>
<dbReference type="GO" id="GO:1990220">
    <property type="term" value="C:GroEL-GroES complex"/>
    <property type="evidence" value="ECO:0000318"/>
    <property type="project" value="GO_Central"/>
</dbReference>
<dbReference type="GO" id="GO:0005524">
    <property type="term" value="F:ATP binding"/>
    <property type="evidence" value="ECO:0000318"/>
    <property type="project" value="GO_Central"/>
</dbReference>
<dbReference type="GO" id="GO:0140662">
    <property type="term" value="F:ATP-dependent protein folding chaperone"/>
    <property type="evidence" value="ECO:0007669"/>
    <property type="project" value="InterPro"/>
</dbReference>
<dbReference type="GO" id="GO:0016853">
    <property type="term" value="F:isomerase activity"/>
    <property type="evidence" value="ECO:0007669"/>
    <property type="project" value="UniProtKB-KW"/>
</dbReference>
<dbReference type="GO" id="GO:0051082">
    <property type="term" value="F:unfolded protein binding"/>
    <property type="evidence" value="ECO:0000318"/>
    <property type="project" value="GO_Central"/>
</dbReference>
<dbReference type="GO" id="GO:0051085">
    <property type="term" value="P:chaperone cofactor-dependent protein refolding"/>
    <property type="evidence" value="ECO:0000318"/>
    <property type="project" value="GO_Central"/>
</dbReference>
<dbReference type="GO" id="GO:0042026">
    <property type="term" value="P:protein refolding"/>
    <property type="evidence" value="ECO:0007669"/>
    <property type="project" value="UniProtKB-UniRule"/>
</dbReference>
<dbReference type="GO" id="GO:0009408">
    <property type="term" value="P:response to heat"/>
    <property type="evidence" value="ECO:0000318"/>
    <property type="project" value="GO_Central"/>
</dbReference>
<dbReference type="CDD" id="cd03344">
    <property type="entry name" value="GroEL"/>
    <property type="match status" value="1"/>
</dbReference>
<dbReference type="FunFam" id="1.10.560.10:FF:000001">
    <property type="entry name" value="60 kDa chaperonin"/>
    <property type="match status" value="1"/>
</dbReference>
<dbReference type="FunFam" id="3.50.7.10:FF:000001">
    <property type="entry name" value="60 kDa chaperonin"/>
    <property type="match status" value="1"/>
</dbReference>
<dbReference type="Gene3D" id="3.50.7.10">
    <property type="entry name" value="GroEL"/>
    <property type="match status" value="1"/>
</dbReference>
<dbReference type="Gene3D" id="1.10.560.10">
    <property type="entry name" value="GroEL-like equatorial domain"/>
    <property type="match status" value="1"/>
</dbReference>
<dbReference type="Gene3D" id="3.30.260.10">
    <property type="entry name" value="TCP-1-like chaperonin intermediate domain"/>
    <property type="match status" value="1"/>
</dbReference>
<dbReference type="HAMAP" id="MF_00600">
    <property type="entry name" value="CH60"/>
    <property type="match status" value="1"/>
</dbReference>
<dbReference type="InterPro" id="IPR018370">
    <property type="entry name" value="Chaperonin_Cpn60_CS"/>
</dbReference>
<dbReference type="InterPro" id="IPR001844">
    <property type="entry name" value="Cpn60/GroEL"/>
</dbReference>
<dbReference type="InterPro" id="IPR002423">
    <property type="entry name" value="Cpn60/GroEL/TCP-1"/>
</dbReference>
<dbReference type="InterPro" id="IPR027409">
    <property type="entry name" value="GroEL-like_apical_dom_sf"/>
</dbReference>
<dbReference type="InterPro" id="IPR027413">
    <property type="entry name" value="GROEL-like_equatorial_sf"/>
</dbReference>
<dbReference type="InterPro" id="IPR027410">
    <property type="entry name" value="TCP-1-like_intermed_sf"/>
</dbReference>
<dbReference type="NCBIfam" id="TIGR02348">
    <property type="entry name" value="GroEL"/>
    <property type="match status" value="1"/>
</dbReference>
<dbReference type="NCBIfam" id="NF000592">
    <property type="entry name" value="PRK00013.1"/>
    <property type="match status" value="1"/>
</dbReference>
<dbReference type="NCBIfam" id="NF009487">
    <property type="entry name" value="PRK12849.1"/>
    <property type="match status" value="1"/>
</dbReference>
<dbReference type="NCBIfam" id="NF009488">
    <property type="entry name" value="PRK12850.1"/>
    <property type="match status" value="1"/>
</dbReference>
<dbReference type="NCBIfam" id="NF009489">
    <property type="entry name" value="PRK12851.1"/>
    <property type="match status" value="1"/>
</dbReference>
<dbReference type="PANTHER" id="PTHR45633">
    <property type="entry name" value="60 KDA HEAT SHOCK PROTEIN, MITOCHONDRIAL"/>
    <property type="match status" value="1"/>
</dbReference>
<dbReference type="Pfam" id="PF00118">
    <property type="entry name" value="Cpn60_TCP1"/>
    <property type="match status" value="1"/>
</dbReference>
<dbReference type="PRINTS" id="PR00298">
    <property type="entry name" value="CHAPERONIN60"/>
</dbReference>
<dbReference type="SUPFAM" id="SSF52029">
    <property type="entry name" value="GroEL apical domain-like"/>
    <property type="match status" value="1"/>
</dbReference>
<dbReference type="SUPFAM" id="SSF48592">
    <property type="entry name" value="GroEL equatorial domain-like"/>
    <property type="match status" value="1"/>
</dbReference>
<dbReference type="SUPFAM" id="SSF54849">
    <property type="entry name" value="GroEL-intermediate domain like"/>
    <property type="match status" value="1"/>
</dbReference>
<dbReference type="PROSITE" id="PS00296">
    <property type="entry name" value="CHAPERONINS_CPN60"/>
    <property type="match status" value="1"/>
</dbReference>
<proteinExistence type="inferred from homology"/>
<sequence length="545" mass="57080">MAAKEVVFGNDARVKMLAGVNILANAVKVTLGPKGRNVVLDKSFGSPLITKDGVSVAKEIELEDKFENMGAQMVKEVASKANDAAGDGTTTATVLAQAIVTEGLKAVAAGMNPMDLKRGIDKAVIAAVAELKNLSQDCADSKAIAQVGTISANSDESIGQIIATAMEKVGKEGVITVEEGQALENELDVVEGMQFDRGYLSPYFINKPETGSVELDHPFVLLVDKKISNIRELLPILEGLAKTGKPLLIVAEDVEGEALATLVVNNMRGIVKVAAVKAPGFGDRRKAMLQDVAILTGGTVIAEEIGLELEKATLEDLGTAKRVVITKDNTTIIDGNGEQAQIEARVSQIKQQIEESTSDYDKEKLQERMAKLAGGVAVIKVGAATEVEMKEKKARVEDALHATRAAVEEGVVPGGGVALIRVASKIADVEVANEDQKHGVVIALRAMEAPLRQIATNAGEEASVVANNVKNGSGNYGYNAGNDTYGDMLEMGILDPTKVTRSALQFAASIAGLMITTEAMVAELPKADAPDMGGMGGMGGMGGMM</sequence>
<reference key="1">
    <citation type="journal article" date="2002" name="Nat. Biotechnol.">
        <title>Genome sequence of the dissimilatory metal ion-reducing bacterium Shewanella oneidensis.</title>
        <authorList>
            <person name="Heidelberg J.F."/>
            <person name="Paulsen I.T."/>
            <person name="Nelson K.E."/>
            <person name="Gaidos E.J."/>
            <person name="Nelson W.C."/>
            <person name="Read T.D."/>
            <person name="Eisen J.A."/>
            <person name="Seshadri R."/>
            <person name="Ward N.L."/>
            <person name="Methe B.A."/>
            <person name="Clayton R.A."/>
            <person name="Meyer T."/>
            <person name="Tsapin A."/>
            <person name="Scott J."/>
            <person name="Beanan M.J."/>
            <person name="Brinkac L.M."/>
            <person name="Daugherty S.C."/>
            <person name="DeBoy R.T."/>
            <person name="Dodson R.J."/>
            <person name="Durkin A.S."/>
            <person name="Haft D.H."/>
            <person name="Kolonay J.F."/>
            <person name="Madupu R."/>
            <person name="Peterson J.D."/>
            <person name="Umayam L.A."/>
            <person name="White O."/>
            <person name="Wolf A.M."/>
            <person name="Vamathevan J.J."/>
            <person name="Weidman J.F."/>
            <person name="Impraim M."/>
            <person name="Lee K."/>
            <person name="Berry K.J."/>
            <person name="Lee C."/>
            <person name="Mueller J."/>
            <person name="Khouri H.M."/>
            <person name="Gill J."/>
            <person name="Utterback T.R."/>
            <person name="McDonald L.A."/>
            <person name="Feldblyum T.V."/>
            <person name="Smith H.O."/>
            <person name="Venter J.C."/>
            <person name="Nealson K.H."/>
            <person name="Fraser C.M."/>
        </authorList>
    </citation>
    <scope>NUCLEOTIDE SEQUENCE [LARGE SCALE GENOMIC DNA]</scope>
    <source>
        <strain>ATCC 700550 / JCM 31522 / CIP 106686 / LMG 19005 / NCIMB 14063 / MR-1</strain>
    </source>
</reference>
<name>CH60_SHEON</name>